<feature type="transit peptide" description="Mitochondrion" evidence="2">
    <location>
        <begin position="1"/>
        <end position="30"/>
    </location>
</feature>
<feature type="chain" id="PRO_0000405600" description="ATPase expression protein 1, mitochondrial">
    <location>
        <begin position="31"/>
        <end position="505"/>
    </location>
</feature>
<proteinExistence type="inferred from homology"/>
<protein>
    <recommendedName>
        <fullName>ATPase expression protein 1, mitochondrial</fullName>
    </recommendedName>
</protein>
<reference key="1">
    <citation type="journal article" date="2004" name="Nature">
        <title>Genome evolution in yeasts.</title>
        <authorList>
            <person name="Dujon B."/>
            <person name="Sherman D."/>
            <person name="Fischer G."/>
            <person name="Durrens P."/>
            <person name="Casaregola S."/>
            <person name="Lafontaine I."/>
            <person name="de Montigny J."/>
            <person name="Marck C."/>
            <person name="Neuveglise C."/>
            <person name="Talla E."/>
            <person name="Goffard N."/>
            <person name="Frangeul L."/>
            <person name="Aigle M."/>
            <person name="Anthouard V."/>
            <person name="Babour A."/>
            <person name="Barbe V."/>
            <person name="Barnay S."/>
            <person name="Blanchin S."/>
            <person name="Beckerich J.-M."/>
            <person name="Beyne E."/>
            <person name="Bleykasten C."/>
            <person name="Boisrame A."/>
            <person name="Boyer J."/>
            <person name="Cattolico L."/>
            <person name="Confanioleri F."/>
            <person name="de Daruvar A."/>
            <person name="Despons L."/>
            <person name="Fabre E."/>
            <person name="Fairhead C."/>
            <person name="Ferry-Dumazet H."/>
            <person name="Groppi A."/>
            <person name="Hantraye F."/>
            <person name="Hennequin C."/>
            <person name="Jauniaux N."/>
            <person name="Joyet P."/>
            <person name="Kachouri R."/>
            <person name="Kerrest A."/>
            <person name="Koszul R."/>
            <person name="Lemaire M."/>
            <person name="Lesur I."/>
            <person name="Ma L."/>
            <person name="Muller H."/>
            <person name="Nicaud J.-M."/>
            <person name="Nikolski M."/>
            <person name="Oztas S."/>
            <person name="Ozier-Kalogeropoulos O."/>
            <person name="Pellenz S."/>
            <person name="Potier S."/>
            <person name="Richard G.-F."/>
            <person name="Straub M.-L."/>
            <person name="Suleau A."/>
            <person name="Swennen D."/>
            <person name="Tekaia F."/>
            <person name="Wesolowski-Louvel M."/>
            <person name="Westhof E."/>
            <person name="Wirth B."/>
            <person name="Zeniou-Meyer M."/>
            <person name="Zivanovic Y."/>
            <person name="Bolotin-Fukuhara M."/>
            <person name="Thierry A."/>
            <person name="Bouchier C."/>
            <person name="Caudron B."/>
            <person name="Scarpelli C."/>
            <person name="Gaillardin C."/>
            <person name="Weissenbach J."/>
            <person name="Wincker P."/>
            <person name="Souciet J.-L."/>
        </authorList>
    </citation>
    <scope>NUCLEOTIDE SEQUENCE [LARGE SCALE GENOMIC DNA]</scope>
    <source>
        <strain>ATCC 2001 / BCRC 20586 / JCM 3761 / NBRC 0622 / NRRL Y-65 / CBS 138</strain>
    </source>
</reference>
<comment type="function">
    <text evidence="1">Required for translation of the mitochondrial OLI1 transcript encoding subunit 9 of mitochondrial ATP synthase.</text>
</comment>
<comment type="subcellular location">
    <subcellularLocation>
        <location evidence="1">Mitochondrion</location>
    </subcellularLocation>
</comment>
<comment type="similarity">
    <text evidence="3">Belongs to the AEP1 family.</text>
</comment>
<name>AEP1_CANGA</name>
<keyword id="KW-0496">Mitochondrion</keyword>
<keyword id="KW-1185">Reference proteome</keyword>
<keyword id="KW-0809">Transit peptide</keyword>
<keyword id="KW-0810">Translation regulation</keyword>
<sequence>MSTSGTTKGIPIPLNIFKRKSIPFGRISRVTPKPEQLLHPFYRPGNVSSLGLCMKEGKPALLDSKSIIPSIVQNSKTGNPVLANCSLAFSSVQGVSTWLKQYENLRETRTTPFSTIPFPDLNRYLTSLPKSKVEIIEKAYTNLINNDGSHISKGIILELVHELSSDFELAVFSENILIFFLNDKVSKRSELACVLEAAFDLLDTHIDQPKTIYKFLMAFFAKYFEVPVQTDTDLNTLMVKLLMKLENKFHLESMYSKMVPELTEALFSFYTREGNLHEANIAINDLIKKGFIPKSEDIENYLTLINTKYPGHNSQDYMWRLFHIAHFEGLIQSSDHPNLLKFLVQNCRHREEIETVFTIVAKNKNSKILLEHLTAPVIDSISNMKMHRVPKSSLLSDYYKMMKFAFNNELSHQLKLLLLQGYITFGNFSMSAKIIEDNHLNLTVDIANKLIKIIKHNNKLFKGIDCPGFSEEALALFLECYIKPFEDELNQHSKKWLIRQQHYCK</sequence>
<organism>
    <name type="scientific">Candida glabrata (strain ATCC 2001 / BCRC 20586 / JCM 3761 / NBRC 0622 / NRRL Y-65 / CBS 138)</name>
    <name type="common">Yeast</name>
    <name type="synonym">Nakaseomyces glabratus</name>
    <dbReference type="NCBI Taxonomy" id="284593"/>
    <lineage>
        <taxon>Eukaryota</taxon>
        <taxon>Fungi</taxon>
        <taxon>Dikarya</taxon>
        <taxon>Ascomycota</taxon>
        <taxon>Saccharomycotina</taxon>
        <taxon>Saccharomycetes</taxon>
        <taxon>Saccharomycetales</taxon>
        <taxon>Saccharomycetaceae</taxon>
        <taxon>Nakaseomyces</taxon>
    </lineage>
</organism>
<dbReference type="EMBL" id="CR380952">
    <property type="protein sequence ID" value="CAG59177.1"/>
    <property type="molecule type" value="Genomic_DNA"/>
</dbReference>
<dbReference type="RefSeq" id="XP_446253.1">
    <property type="nucleotide sequence ID" value="XM_446253.1"/>
</dbReference>
<dbReference type="SMR" id="Q6FU41"/>
<dbReference type="FunCoup" id="Q6FU41">
    <property type="interactions" value="168"/>
</dbReference>
<dbReference type="EnsemblFungi" id="CAGL0F06567g-T">
    <property type="protein sequence ID" value="CAGL0F06567g-T-p1"/>
    <property type="gene ID" value="CAGL0F06567g"/>
</dbReference>
<dbReference type="KEGG" id="cgr:2887914"/>
<dbReference type="CGD" id="CAL0131320">
    <property type="gene designation" value="CAGL0F06567g"/>
</dbReference>
<dbReference type="VEuPathDB" id="FungiDB:CAGL0F06567g"/>
<dbReference type="eggNOG" id="ENOG502RXUX">
    <property type="taxonomic scope" value="Eukaryota"/>
</dbReference>
<dbReference type="HOGENOM" id="CLU_035453_0_0_1"/>
<dbReference type="InParanoid" id="Q6FU41"/>
<dbReference type="OMA" id="CKVEANE"/>
<dbReference type="Proteomes" id="UP000002428">
    <property type="component" value="Chromosome F"/>
</dbReference>
<dbReference type="GO" id="GO:0005739">
    <property type="term" value="C:mitochondrion"/>
    <property type="evidence" value="ECO:0007669"/>
    <property type="project" value="UniProtKB-SubCell"/>
</dbReference>
<dbReference type="GO" id="GO:0045182">
    <property type="term" value="F:translation regulator activity"/>
    <property type="evidence" value="ECO:0007669"/>
    <property type="project" value="InterPro"/>
</dbReference>
<dbReference type="InterPro" id="IPR031467">
    <property type="entry name" value="Aep1"/>
</dbReference>
<dbReference type="Pfam" id="PF17049">
    <property type="entry name" value="AEP1"/>
    <property type="match status" value="1"/>
</dbReference>
<evidence type="ECO:0000250" key="1"/>
<evidence type="ECO:0000255" key="2"/>
<evidence type="ECO:0000305" key="3"/>
<gene>
    <name type="primary">AEP1</name>
    <name type="ordered locus">CAGL0F06567g</name>
</gene>
<accession>Q6FU41</accession>